<protein>
    <recommendedName>
        <fullName evidence="1">Chaperonin GroEL 2</fullName>
        <ecNumber evidence="1">5.6.1.7</ecNumber>
    </recommendedName>
    <alternativeName>
        <fullName evidence="1">60 kDa chaperonin 2</fullName>
    </alternativeName>
    <alternativeName>
        <fullName evidence="1">Chaperonin-60 2</fullName>
        <shortName evidence="1">Cpn60 2</shortName>
    </alternativeName>
</protein>
<name>CH602_SALRD</name>
<proteinExistence type="inferred from homology"/>
<gene>
    <name evidence="1" type="primary">groEL2</name>
    <name evidence="1" type="synonym">groL2</name>
    <name type="ordered locus">SRU_2122</name>
</gene>
<feature type="chain" id="PRO_0000256983" description="Chaperonin GroEL 2">
    <location>
        <begin position="1"/>
        <end position="560"/>
    </location>
</feature>
<feature type="region of interest" description="Disordered" evidence="2">
    <location>
        <begin position="524"/>
        <end position="546"/>
    </location>
</feature>
<feature type="compositionally biased region" description="Gly residues" evidence="2">
    <location>
        <begin position="532"/>
        <end position="546"/>
    </location>
</feature>
<feature type="binding site" evidence="1">
    <location>
        <begin position="29"/>
        <end position="32"/>
    </location>
    <ligand>
        <name>ATP</name>
        <dbReference type="ChEBI" id="CHEBI:30616"/>
    </ligand>
</feature>
<feature type="binding site" evidence="1">
    <location>
        <position position="50"/>
    </location>
    <ligand>
        <name>ATP</name>
        <dbReference type="ChEBI" id="CHEBI:30616"/>
    </ligand>
</feature>
<feature type="binding site" evidence="1">
    <location>
        <begin position="86"/>
        <end position="90"/>
    </location>
    <ligand>
        <name>ATP</name>
        <dbReference type="ChEBI" id="CHEBI:30616"/>
    </ligand>
</feature>
<feature type="binding site" evidence="1">
    <location>
        <position position="414"/>
    </location>
    <ligand>
        <name>ATP</name>
        <dbReference type="ChEBI" id="CHEBI:30616"/>
    </ligand>
</feature>
<feature type="binding site" evidence="1">
    <location>
        <position position="494"/>
    </location>
    <ligand>
        <name>ATP</name>
        <dbReference type="ChEBI" id="CHEBI:30616"/>
    </ligand>
</feature>
<evidence type="ECO:0000255" key="1">
    <source>
        <dbReference type="HAMAP-Rule" id="MF_00600"/>
    </source>
</evidence>
<evidence type="ECO:0000256" key="2">
    <source>
        <dbReference type="SAM" id="MobiDB-lite"/>
    </source>
</evidence>
<accession>Q2S0Q3</accession>
<organism>
    <name type="scientific">Salinibacter ruber (strain DSM 13855 / M31)</name>
    <dbReference type="NCBI Taxonomy" id="309807"/>
    <lineage>
        <taxon>Bacteria</taxon>
        <taxon>Pseudomonadati</taxon>
        <taxon>Rhodothermota</taxon>
        <taxon>Rhodothermia</taxon>
        <taxon>Rhodothermales</taxon>
        <taxon>Salinibacteraceae</taxon>
        <taxon>Salinibacter</taxon>
    </lineage>
</organism>
<comment type="function">
    <text evidence="1">Together with its co-chaperonin GroES, plays an essential role in assisting protein folding. The GroEL-GroES system forms a nano-cage that allows encapsulation of the non-native substrate proteins and provides a physical environment optimized to promote and accelerate protein folding.</text>
</comment>
<comment type="catalytic activity">
    <reaction evidence="1">
        <text>ATP + H2O + a folded polypeptide = ADP + phosphate + an unfolded polypeptide.</text>
        <dbReference type="EC" id="5.6.1.7"/>
    </reaction>
</comment>
<comment type="subunit">
    <text evidence="1">Forms a cylinder of 14 subunits composed of two heptameric rings stacked back-to-back. Interacts with the co-chaperonin GroES.</text>
</comment>
<comment type="subcellular location">
    <subcellularLocation>
        <location evidence="1">Cytoplasm</location>
    </subcellularLocation>
</comment>
<comment type="similarity">
    <text evidence="1">Belongs to the chaperonin (HSP60) family.</text>
</comment>
<keyword id="KW-0067">ATP-binding</keyword>
<keyword id="KW-0143">Chaperone</keyword>
<keyword id="KW-0963">Cytoplasm</keyword>
<keyword id="KW-0413">Isomerase</keyword>
<keyword id="KW-0547">Nucleotide-binding</keyword>
<keyword id="KW-1185">Reference proteome</keyword>
<reference key="1">
    <citation type="journal article" date="2005" name="Proc. Natl. Acad. Sci. U.S.A.">
        <title>The genome of Salinibacter ruber: convergence and gene exchange among hyperhalophilic bacteria and archaea.</title>
        <authorList>
            <person name="Mongodin E.F."/>
            <person name="Nelson K.E."/>
            <person name="Daugherty S."/>
            <person name="DeBoy R.T."/>
            <person name="Wister J."/>
            <person name="Khouri H."/>
            <person name="Weidman J."/>
            <person name="Walsh D.A."/>
            <person name="Papke R.T."/>
            <person name="Sanchez Perez G."/>
            <person name="Sharma A.K."/>
            <person name="Nesbo C.L."/>
            <person name="MacLeod D."/>
            <person name="Bapteste E."/>
            <person name="Doolittle W.F."/>
            <person name="Charlebois R.L."/>
            <person name="Legault B."/>
            <person name="Rodriguez-Valera F."/>
        </authorList>
    </citation>
    <scope>NUCLEOTIDE SEQUENCE [LARGE SCALE GENOMIC DNA]</scope>
    <source>
        <strain>DSM 13855 / CECT 5946 / M31</strain>
    </source>
</reference>
<dbReference type="EC" id="5.6.1.7" evidence="1"/>
<dbReference type="EMBL" id="CP000159">
    <property type="protein sequence ID" value="ABC46249.1"/>
    <property type="molecule type" value="Genomic_DNA"/>
</dbReference>
<dbReference type="RefSeq" id="YP_446228.1">
    <property type="nucleotide sequence ID" value="NC_007677.1"/>
</dbReference>
<dbReference type="SMR" id="Q2S0Q3"/>
<dbReference type="STRING" id="309807.SRU_2122"/>
<dbReference type="EnsemblBacteria" id="ABC46249">
    <property type="protein sequence ID" value="ABC46249"/>
    <property type="gene ID" value="SRU_2122"/>
</dbReference>
<dbReference type="KEGG" id="sru:SRU_2122"/>
<dbReference type="PATRIC" id="fig|309807.25.peg.2209"/>
<dbReference type="eggNOG" id="COG0459">
    <property type="taxonomic scope" value="Bacteria"/>
</dbReference>
<dbReference type="HOGENOM" id="CLU_016503_3_0_10"/>
<dbReference type="Proteomes" id="UP000008674">
    <property type="component" value="Chromosome"/>
</dbReference>
<dbReference type="GO" id="GO:0005737">
    <property type="term" value="C:cytoplasm"/>
    <property type="evidence" value="ECO:0007669"/>
    <property type="project" value="UniProtKB-SubCell"/>
</dbReference>
<dbReference type="GO" id="GO:0005524">
    <property type="term" value="F:ATP binding"/>
    <property type="evidence" value="ECO:0007669"/>
    <property type="project" value="UniProtKB-UniRule"/>
</dbReference>
<dbReference type="GO" id="GO:0140662">
    <property type="term" value="F:ATP-dependent protein folding chaperone"/>
    <property type="evidence" value="ECO:0007669"/>
    <property type="project" value="InterPro"/>
</dbReference>
<dbReference type="GO" id="GO:0016853">
    <property type="term" value="F:isomerase activity"/>
    <property type="evidence" value="ECO:0007669"/>
    <property type="project" value="UniProtKB-KW"/>
</dbReference>
<dbReference type="GO" id="GO:0051082">
    <property type="term" value="F:unfolded protein binding"/>
    <property type="evidence" value="ECO:0007669"/>
    <property type="project" value="UniProtKB-UniRule"/>
</dbReference>
<dbReference type="GO" id="GO:0042026">
    <property type="term" value="P:protein refolding"/>
    <property type="evidence" value="ECO:0007669"/>
    <property type="project" value="UniProtKB-UniRule"/>
</dbReference>
<dbReference type="CDD" id="cd03344">
    <property type="entry name" value="GroEL"/>
    <property type="match status" value="1"/>
</dbReference>
<dbReference type="FunFam" id="3.50.7.10:FF:000001">
    <property type="entry name" value="60 kDa chaperonin"/>
    <property type="match status" value="1"/>
</dbReference>
<dbReference type="Gene3D" id="3.50.7.10">
    <property type="entry name" value="GroEL"/>
    <property type="match status" value="1"/>
</dbReference>
<dbReference type="Gene3D" id="1.10.560.10">
    <property type="entry name" value="GroEL-like equatorial domain"/>
    <property type="match status" value="1"/>
</dbReference>
<dbReference type="Gene3D" id="3.30.260.10">
    <property type="entry name" value="TCP-1-like chaperonin intermediate domain"/>
    <property type="match status" value="1"/>
</dbReference>
<dbReference type="HAMAP" id="MF_00600">
    <property type="entry name" value="CH60"/>
    <property type="match status" value="1"/>
</dbReference>
<dbReference type="InterPro" id="IPR018370">
    <property type="entry name" value="Chaperonin_Cpn60_CS"/>
</dbReference>
<dbReference type="InterPro" id="IPR001844">
    <property type="entry name" value="Cpn60/GroEL"/>
</dbReference>
<dbReference type="InterPro" id="IPR002423">
    <property type="entry name" value="Cpn60/GroEL/TCP-1"/>
</dbReference>
<dbReference type="InterPro" id="IPR027409">
    <property type="entry name" value="GroEL-like_apical_dom_sf"/>
</dbReference>
<dbReference type="InterPro" id="IPR027413">
    <property type="entry name" value="GROEL-like_equatorial_sf"/>
</dbReference>
<dbReference type="InterPro" id="IPR027410">
    <property type="entry name" value="TCP-1-like_intermed_sf"/>
</dbReference>
<dbReference type="NCBIfam" id="TIGR02348">
    <property type="entry name" value="GroEL"/>
    <property type="match status" value="1"/>
</dbReference>
<dbReference type="NCBIfam" id="NF000592">
    <property type="entry name" value="PRK00013.1"/>
    <property type="match status" value="1"/>
</dbReference>
<dbReference type="NCBIfam" id="NF009487">
    <property type="entry name" value="PRK12849.1"/>
    <property type="match status" value="1"/>
</dbReference>
<dbReference type="NCBIfam" id="NF009488">
    <property type="entry name" value="PRK12850.1"/>
    <property type="match status" value="1"/>
</dbReference>
<dbReference type="NCBIfam" id="NF009489">
    <property type="entry name" value="PRK12851.1"/>
    <property type="match status" value="1"/>
</dbReference>
<dbReference type="PANTHER" id="PTHR45633">
    <property type="entry name" value="60 KDA HEAT SHOCK PROTEIN, MITOCHONDRIAL"/>
    <property type="match status" value="1"/>
</dbReference>
<dbReference type="Pfam" id="PF00118">
    <property type="entry name" value="Cpn60_TCP1"/>
    <property type="match status" value="1"/>
</dbReference>
<dbReference type="PRINTS" id="PR00298">
    <property type="entry name" value="CHAPERONIN60"/>
</dbReference>
<dbReference type="SUPFAM" id="SSF52029">
    <property type="entry name" value="GroEL apical domain-like"/>
    <property type="match status" value="1"/>
</dbReference>
<dbReference type="SUPFAM" id="SSF48592">
    <property type="entry name" value="GroEL equatorial domain-like"/>
    <property type="match status" value="1"/>
</dbReference>
<dbReference type="SUPFAM" id="SSF54849">
    <property type="entry name" value="GroEL-intermediate domain like"/>
    <property type="match status" value="1"/>
</dbReference>
<dbReference type="PROSITE" id="PS00296">
    <property type="entry name" value="CHAPERONINS_CPN60"/>
    <property type="match status" value="1"/>
</dbReference>
<sequence>MAKQIKFDSDARSALQEGVDQMAKAVKVTLGPKGRNVVLEKSFGAPTITKDGVTVAKEIELEERLPNIGAQVLKEAASKTNDDAGDGTTTATVLAQSVINAGMKSVTSGANPMDVKRGITAAAEEVVTHLRNQSDPVEGKDRISQVATISANNDDAIGDLIADAFERVGQDGVITVEEARGIETYLDVVEGMQFDRGYLSPYFVTDSEEMEAVLEDAYILIYDDEVGNMQDLLPILEKVSQTSNPLLIIAEDVEGEALATLVVNKMRGTLKVSAVKAPGFGDRRQSMLEDIAVLTGGTVISEEKGYRLENATLDYLGQADRVTIDQDNTTIVGGEGSEEEIEARVNQIRQQIANSTSDYDQEKLQERLAKLAGGVAVLNVGAATEPEMKAQKALVEDALSATRAAVDEGVLPGGGVAYLRALESIEEVEVENEDQEIGVSIVREALEAPLRQIAENTGHEGSIVVQKVKDGEGDFGFNARTEEYGDLLDQGVLDPTKVTRSALENAASVGGMLLTTEAVIADLEDEDDDDGGGGGGGGMPAGGAGGMGGMGGMGGMGGMM</sequence>